<dbReference type="EMBL" id="CP000653">
    <property type="protein sequence ID" value="ABP61875.1"/>
    <property type="molecule type" value="Genomic_DNA"/>
</dbReference>
<dbReference type="RefSeq" id="WP_015960204.1">
    <property type="nucleotide sequence ID" value="NC_009436.1"/>
</dbReference>
<dbReference type="SMR" id="A4WDU5"/>
<dbReference type="STRING" id="399742.Ent638_3211"/>
<dbReference type="KEGG" id="ent:Ent638_3211"/>
<dbReference type="eggNOG" id="COG0249">
    <property type="taxonomic scope" value="Bacteria"/>
</dbReference>
<dbReference type="HOGENOM" id="CLU_002472_4_0_6"/>
<dbReference type="OrthoDB" id="9802448at2"/>
<dbReference type="Proteomes" id="UP000000230">
    <property type="component" value="Chromosome"/>
</dbReference>
<dbReference type="GO" id="GO:0005829">
    <property type="term" value="C:cytosol"/>
    <property type="evidence" value="ECO:0007669"/>
    <property type="project" value="TreeGrafter"/>
</dbReference>
<dbReference type="GO" id="GO:0005524">
    <property type="term" value="F:ATP binding"/>
    <property type="evidence" value="ECO:0007669"/>
    <property type="project" value="UniProtKB-UniRule"/>
</dbReference>
<dbReference type="GO" id="GO:0140664">
    <property type="term" value="F:ATP-dependent DNA damage sensor activity"/>
    <property type="evidence" value="ECO:0007669"/>
    <property type="project" value="InterPro"/>
</dbReference>
<dbReference type="GO" id="GO:0003684">
    <property type="term" value="F:damaged DNA binding"/>
    <property type="evidence" value="ECO:0007669"/>
    <property type="project" value="UniProtKB-UniRule"/>
</dbReference>
<dbReference type="GO" id="GO:0030983">
    <property type="term" value="F:mismatched DNA binding"/>
    <property type="evidence" value="ECO:0007669"/>
    <property type="project" value="InterPro"/>
</dbReference>
<dbReference type="GO" id="GO:0006298">
    <property type="term" value="P:mismatch repair"/>
    <property type="evidence" value="ECO:0007669"/>
    <property type="project" value="UniProtKB-UniRule"/>
</dbReference>
<dbReference type="CDD" id="cd03284">
    <property type="entry name" value="ABC_MutS1"/>
    <property type="match status" value="1"/>
</dbReference>
<dbReference type="FunFam" id="1.10.1420.10:FF:000002">
    <property type="entry name" value="DNA mismatch repair protein MutS"/>
    <property type="match status" value="1"/>
</dbReference>
<dbReference type="FunFam" id="3.30.420.110:FF:000001">
    <property type="entry name" value="DNA mismatch repair protein MutS"/>
    <property type="match status" value="1"/>
</dbReference>
<dbReference type="FunFam" id="3.40.1170.10:FF:000001">
    <property type="entry name" value="DNA mismatch repair protein MutS"/>
    <property type="match status" value="1"/>
</dbReference>
<dbReference type="FunFam" id="3.40.50.300:FF:000283">
    <property type="entry name" value="DNA mismatch repair protein MutS"/>
    <property type="match status" value="1"/>
</dbReference>
<dbReference type="Gene3D" id="1.10.1420.10">
    <property type="match status" value="2"/>
</dbReference>
<dbReference type="Gene3D" id="6.10.140.430">
    <property type="match status" value="1"/>
</dbReference>
<dbReference type="Gene3D" id="3.40.1170.10">
    <property type="entry name" value="DNA repair protein MutS, domain I"/>
    <property type="match status" value="1"/>
</dbReference>
<dbReference type="Gene3D" id="3.30.420.110">
    <property type="entry name" value="MutS, connector domain"/>
    <property type="match status" value="1"/>
</dbReference>
<dbReference type="Gene3D" id="3.40.50.300">
    <property type="entry name" value="P-loop containing nucleotide triphosphate hydrolases"/>
    <property type="match status" value="1"/>
</dbReference>
<dbReference type="HAMAP" id="MF_00096">
    <property type="entry name" value="MutS"/>
    <property type="match status" value="1"/>
</dbReference>
<dbReference type="InterPro" id="IPR005748">
    <property type="entry name" value="DNA_mismatch_repair_MutS"/>
</dbReference>
<dbReference type="InterPro" id="IPR007695">
    <property type="entry name" value="DNA_mismatch_repair_MutS-lik_N"/>
</dbReference>
<dbReference type="InterPro" id="IPR017261">
    <property type="entry name" value="DNA_mismatch_repair_MutS/MSH"/>
</dbReference>
<dbReference type="InterPro" id="IPR000432">
    <property type="entry name" value="DNA_mismatch_repair_MutS_C"/>
</dbReference>
<dbReference type="InterPro" id="IPR007861">
    <property type="entry name" value="DNA_mismatch_repair_MutS_clamp"/>
</dbReference>
<dbReference type="InterPro" id="IPR007696">
    <property type="entry name" value="DNA_mismatch_repair_MutS_core"/>
</dbReference>
<dbReference type="InterPro" id="IPR016151">
    <property type="entry name" value="DNA_mismatch_repair_MutS_N"/>
</dbReference>
<dbReference type="InterPro" id="IPR036187">
    <property type="entry name" value="DNA_mismatch_repair_MutS_sf"/>
</dbReference>
<dbReference type="InterPro" id="IPR007860">
    <property type="entry name" value="DNA_mmatch_repair_MutS_con_dom"/>
</dbReference>
<dbReference type="InterPro" id="IPR045076">
    <property type="entry name" value="MutS"/>
</dbReference>
<dbReference type="InterPro" id="IPR036678">
    <property type="entry name" value="MutS_con_dom_sf"/>
</dbReference>
<dbReference type="InterPro" id="IPR027417">
    <property type="entry name" value="P-loop_NTPase"/>
</dbReference>
<dbReference type="NCBIfam" id="TIGR01070">
    <property type="entry name" value="mutS1"/>
    <property type="match status" value="1"/>
</dbReference>
<dbReference type="NCBIfam" id="NF003810">
    <property type="entry name" value="PRK05399.1"/>
    <property type="match status" value="1"/>
</dbReference>
<dbReference type="PANTHER" id="PTHR11361:SF34">
    <property type="entry name" value="DNA MISMATCH REPAIR PROTEIN MSH1, MITOCHONDRIAL"/>
    <property type="match status" value="1"/>
</dbReference>
<dbReference type="PANTHER" id="PTHR11361">
    <property type="entry name" value="DNA MISMATCH REPAIR PROTEIN MUTS FAMILY MEMBER"/>
    <property type="match status" value="1"/>
</dbReference>
<dbReference type="Pfam" id="PF01624">
    <property type="entry name" value="MutS_I"/>
    <property type="match status" value="1"/>
</dbReference>
<dbReference type="Pfam" id="PF05188">
    <property type="entry name" value="MutS_II"/>
    <property type="match status" value="1"/>
</dbReference>
<dbReference type="Pfam" id="PF05192">
    <property type="entry name" value="MutS_III"/>
    <property type="match status" value="1"/>
</dbReference>
<dbReference type="Pfam" id="PF05190">
    <property type="entry name" value="MutS_IV"/>
    <property type="match status" value="1"/>
</dbReference>
<dbReference type="Pfam" id="PF00488">
    <property type="entry name" value="MutS_V"/>
    <property type="match status" value="1"/>
</dbReference>
<dbReference type="PIRSF" id="PIRSF037677">
    <property type="entry name" value="DNA_mis_repair_Msh6"/>
    <property type="match status" value="1"/>
</dbReference>
<dbReference type="SMART" id="SM00534">
    <property type="entry name" value="MUTSac"/>
    <property type="match status" value="1"/>
</dbReference>
<dbReference type="SMART" id="SM00533">
    <property type="entry name" value="MUTSd"/>
    <property type="match status" value="1"/>
</dbReference>
<dbReference type="SUPFAM" id="SSF55271">
    <property type="entry name" value="DNA repair protein MutS, domain I"/>
    <property type="match status" value="1"/>
</dbReference>
<dbReference type="SUPFAM" id="SSF53150">
    <property type="entry name" value="DNA repair protein MutS, domain II"/>
    <property type="match status" value="1"/>
</dbReference>
<dbReference type="SUPFAM" id="SSF48334">
    <property type="entry name" value="DNA repair protein MutS, domain III"/>
    <property type="match status" value="1"/>
</dbReference>
<dbReference type="SUPFAM" id="SSF52540">
    <property type="entry name" value="P-loop containing nucleoside triphosphate hydrolases"/>
    <property type="match status" value="1"/>
</dbReference>
<dbReference type="PROSITE" id="PS00486">
    <property type="entry name" value="DNA_MISMATCH_REPAIR_2"/>
    <property type="match status" value="1"/>
</dbReference>
<sequence length="853" mass="95161">MSTIENLTAHTPMMQQYLKLKAQHPEILLFYRMGDFYELFYDDAKRASQLLDISLTKRGASAGEPIPMAGIPHHAVENYLAKLVNQGESVAICEQIGDPATSKGPVERKVVRIVTPGTISDEALLQERQDNLLAAIWQDSKGYGYAALDISSGRFRLSEPADRETMAAELQRTNPAELLYAEDFAEMALIDGRRGLRRRPLWEFEIDTARQQLNLQFGTRDLIGFGVENAPRGLCAAGCLLQYVKDTQRTTLPHIRSITMERQQDSIIMDAATRRNLEITQNLAGGVENTLAAVLDSTVTPMGSRMLKRWLHMPVRDTNVLVSRQQTIGALQDRFTELQPVLRQVGDLERILARLALRTARPRDLARMRHAFQQLPTLRAQLAEVNSTPVQKLRETMGEFTELCELLERAVVEAPPVLVRDGGVIAPGYHEELDEWRALADGATDYLDKLEIRERERLGLDTLKVGYNAIHGYYIQISRGQSHHAPIHYVRRQTLKNAERYIIPELKEYEDKVLTSKGKALALEKQLYEELFDMLMPHLADLQASASALAELDVLINLAERADTLNYACPTFIDKPGIRITEGRHPVVEQVLREPFIANPLNLSPQRRMLIITGPNMGGKSTYMRQTALIALLAYIGSYVPAQKVEIGPIDRIFTRVGAADDLASGRSTFMVEMTETANILHNATENSLVLMDEIGRGTSTYDGLSLAWACAESLANKIKALTLFATHYFELTQLPEKMEGVANVHLDALEHGDTIAFMHTVQDGAASKSYGLAVAALAGVPKEVIKRARQKLRELESLSPNAAATQVDGSQMSLLMPAEETSPAMEALENLDPDSLTPRQALEWIYRLKNLV</sequence>
<comment type="function">
    <text evidence="1">This protein is involved in the repair of mismatches in DNA. It is possible that it carries out the mismatch recognition step. This protein has a weak ATPase activity.</text>
</comment>
<comment type="similarity">
    <text evidence="1">Belongs to the DNA mismatch repair MutS family.</text>
</comment>
<evidence type="ECO:0000255" key="1">
    <source>
        <dbReference type="HAMAP-Rule" id="MF_00096"/>
    </source>
</evidence>
<proteinExistence type="inferred from homology"/>
<name>MUTS_ENT38</name>
<organism>
    <name type="scientific">Enterobacter sp. (strain 638)</name>
    <dbReference type="NCBI Taxonomy" id="399742"/>
    <lineage>
        <taxon>Bacteria</taxon>
        <taxon>Pseudomonadati</taxon>
        <taxon>Pseudomonadota</taxon>
        <taxon>Gammaproteobacteria</taxon>
        <taxon>Enterobacterales</taxon>
        <taxon>Enterobacteriaceae</taxon>
        <taxon>Enterobacter</taxon>
    </lineage>
</organism>
<keyword id="KW-0067">ATP-binding</keyword>
<keyword id="KW-0227">DNA damage</keyword>
<keyword id="KW-0234">DNA repair</keyword>
<keyword id="KW-0238">DNA-binding</keyword>
<keyword id="KW-0547">Nucleotide-binding</keyword>
<protein>
    <recommendedName>
        <fullName evidence="1">DNA mismatch repair protein MutS</fullName>
    </recommendedName>
</protein>
<reference key="1">
    <citation type="journal article" date="2010" name="PLoS Genet.">
        <title>Genome sequence of the plant growth promoting endophytic bacterium Enterobacter sp. 638.</title>
        <authorList>
            <person name="Taghavi S."/>
            <person name="van der Lelie D."/>
            <person name="Hoffman A."/>
            <person name="Zhang Y.B."/>
            <person name="Walla M.D."/>
            <person name="Vangronsveld J."/>
            <person name="Newman L."/>
            <person name="Monchy S."/>
        </authorList>
    </citation>
    <scope>NUCLEOTIDE SEQUENCE [LARGE SCALE GENOMIC DNA]</scope>
    <source>
        <strain>638</strain>
    </source>
</reference>
<accession>A4WDU5</accession>
<feature type="chain" id="PRO_1000071275" description="DNA mismatch repair protein MutS">
    <location>
        <begin position="1"/>
        <end position="853"/>
    </location>
</feature>
<feature type="binding site" evidence="1">
    <location>
        <begin position="614"/>
        <end position="621"/>
    </location>
    <ligand>
        <name>ATP</name>
        <dbReference type="ChEBI" id="CHEBI:30616"/>
    </ligand>
</feature>
<gene>
    <name evidence="1" type="primary">mutS</name>
    <name type="ordered locus">Ent638_3211</name>
</gene>